<dbReference type="EMBL" id="CP000036">
    <property type="protein sequence ID" value="ABB68238.1"/>
    <property type="molecule type" value="Genomic_DNA"/>
</dbReference>
<dbReference type="RefSeq" id="WP_000379245.1">
    <property type="nucleotide sequence ID" value="NC_007613.1"/>
</dbReference>
<dbReference type="SMR" id="Q31UM0"/>
<dbReference type="GeneID" id="93778187"/>
<dbReference type="KEGG" id="sbo:SBO_3775"/>
<dbReference type="HOGENOM" id="CLU_039613_8_2_6"/>
<dbReference type="Proteomes" id="UP000007067">
    <property type="component" value="Chromosome"/>
</dbReference>
<dbReference type="GO" id="GO:0003677">
    <property type="term" value="F:DNA binding"/>
    <property type="evidence" value="ECO:0007669"/>
    <property type="project" value="UniProtKB-KW"/>
</dbReference>
<dbReference type="GO" id="GO:0003700">
    <property type="term" value="F:DNA-binding transcription factor activity"/>
    <property type="evidence" value="ECO:0007669"/>
    <property type="project" value="UniProtKB-UniRule"/>
</dbReference>
<dbReference type="GO" id="GO:0045892">
    <property type="term" value="P:negative regulation of DNA-templated transcription"/>
    <property type="evidence" value="ECO:0007669"/>
    <property type="project" value="UniProtKB-UniRule"/>
</dbReference>
<dbReference type="FunFam" id="1.10.10.10:FF:000001">
    <property type="entry name" value="LysR family transcriptional regulator"/>
    <property type="match status" value="1"/>
</dbReference>
<dbReference type="Gene3D" id="3.40.190.10">
    <property type="entry name" value="Periplasmic binding protein-like II"/>
    <property type="match status" value="2"/>
</dbReference>
<dbReference type="Gene3D" id="1.10.10.10">
    <property type="entry name" value="Winged helix-like DNA-binding domain superfamily/Winged helix DNA-binding domain"/>
    <property type="match status" value="1"/>
</dbReference>
<dbReference type="HAMAP" id="MF_01233">
    <property type="entry name" value="HTH_type_HdfR"/>
    <property type="match status" value="1"/>
</dbReference>
<dbReference type="InterPro" id="IPR050176">
    <property type="entry name" value="LTTR"/>
</dbReference>
<dbReference type="InterPro" id="IPR005119">
    <property type="entry name" value="LysR_subst-bd"/>
</dbReference>
<dbReference type="InterPro" id="IPR020890">
    <property type="entry name" value="Tscrpt_reg_HTH_HdfR"/>
</dbReference>
<dbReference type="InterPro" id="IPR000847">
    <property type="entry name" value="Tscrpt_reg_HTH_LysR"/>
</dbReference>
<dbReference type="InterPro" id="IPR036388">
    <property type="entry name" value="WH-like_DNA-bd_sf"/>
</dbReference>
<dbReference type="InterPro" id="IPR036390">
    <property type="entry name" value="WH_DNA-bd_sf"/>
</dbReference>
<dbReference type="NCBIfam" id="NF002946">
    <property type="entry name" value="PRK03601.1"/>
    <property type="match status" value="1"/>
</dbReference>
<dbReference type="PANTHER" id="PTHR30579:SF8">
    <property type="entry name" value="HTH-TYPE TRANSCRIPTIONAL REGULATOR HDFR"/>
    <property type="match status" value="1"/>
</dbReference>
<dbReference type="PANTHER" id="PTHR30579">
    <property type="entry name" value="TRANSCRIPTIONAL REGULATOR"/>
    <property type="match status" value="1"/>
</dbReference>
<dbReference type="Pfam" id="PF00126">
    <property type="entry name" value="HTH_1"/>
    <property type="match status" value="1"/>
</dbReference>
<dbReference type="Pfam" id="PF03466">
    <property type="entry name" value="LysR_substrate"/>
    <property type="match status" value="1"/>
</dbReference>
<dbReference type="PRINTS" id="PR00039">
    <property type="entry name" value="HTHLYSR"/>
</dbReference>
<dbReference type="SUPFAM" id="SSF53850">
    <property type="entry name" value="Periplasmic binding protein-like II"/>
    <property type="match status" value="1"/>
</dbReference>
<dbReference type="SUPFAM" id="SSF46785">
    <property type="entry name" value="Winged helix' DNA-binding domain"/>
    <property type="match status" value="1"/>
</dbReference>
<dbReference type="PROSITE" id="PS50931">
    <property type="entry name" value="HTH_LYSR"/>
    <property type="match status" value="1"/>
</dbReference>
<proteinExistence type="inferred from homology"/>
<organism>
    <name type="scientific">Shigella boydii serotype 4 (strain Sb227)</name>
    <dbReference type="NCBI Taxonomy" id="300268"/>
    <lineage>
        <taxon>Bacteria</taxon>
        <taxon>Pseudomonadati</taxon>
        <taxon>Pseudomonadota</taxon>
        <taxon>Gammaproteobacteria</taxon>
        <taxon>Enterobacterales</taxon>
        <taxon>Enterobacteriaceae</taxon>
        <taxon>Shigella</taxon>
    </lineage>
</organism>
<gene>
    <name evidence="1" type="primary">hdfR</name>
    <name type="ordered locus">SBO_3775</name>
</gene>
<sequence>MDTELLKTFLEVSRTRHFGRAAESLYLTQSAVSFRIRQLENQLGVNLFTRHRNNIRLTAAGEKLLPYAETLMSTWQAARKEVAHTSRHNEFSIGASASLWECMLNQWLGRLYQNQDAHTGLQFEARIAQRQSLVKQLHERQLDLLITTEAPKMDEFSSQLLGYFTLALYTSAPSKLKGDLNYLRLEWGPDFQQHEAGLIGADEVPILTTSSAELAQQQIAMLNGCTWLPVSWARKKGGLHTVVDSTTLSRPLYAIWLQNSDKNALIRDLLKINVLDEVY</sequence>
<comment type="function">
    <text evidence="1">Negatively regulates the transcription of the flagellar master operon flhDC by binding to the upstream region of the operon.</text>
</comment>
<comment type="similarity">
    <text evidence="2">Belongs to the LysR transcriptional regulatory family.</text>
</comment>
<reference key="1">
    <citation type="journal article" date="2005" name="Nucleic Acids Res.">
        <title>Genome dynamics and diversity of Shigella species, the etiologic agents of bacillary dysentery.</title>
        <authorList>
            <person name="Yang F."/>
            <person name="Yang J."/>
            <person name="Zhang X."/>
            <person name="Chen L."/>
            <person name="Jiang Y."/>
            <person name="Yan Y."/>
            <person name="Tang X."/>
            <person name="Wang J."/>
            <person name="Xiong Z."/>
            <person name="Dong J."/>
            <person name="Xue Y."/>
            <person name="Zhu Y."/>
            <person name="Xu X."/>
            <person name="Sun L."/>
            <person name="Chen S."/>
            <person name="Nie H."/>
            <person name="Peng J."/>
            <person name="Xu J."/>
            <person name="Wang Y."/>
            <person name="Yuan Z."/>
            <person name="Wen Y."/>
            <person name="Yao Z."/>
            <person name="Shen Y."/>
            <person name="Qiang B."/>
            <person name="Hou Y."/>
            <person name="Yu J."/>
            <person name="Jin Q."/>
        </authorList>
    </citation>
    <scope>NUCLEOTIDE SEQUENCE [LARGE SCALE GENOMIC DNA]</scope>
    <source>
        <strain>Sb227</strain>
    </source>
</reference>
<protein>
    <recommendedName>
        <fullName evidence="1">HTH-type transcriptional regulator HdfR</fullName>
    </recommendedName>
    <alternativeName>
        <fullName evidence="1">H-NS-dependent flhDC regulator</fullName>
    </alternativeName>
</protein>
<keyword id="KW-0238">DNA-binding</keyword>
<keyword id="KW-0678">Repressor</keyword>
<keyword id="KW-0804">Transcription</keyword>
<keyword id="KW-0805">Transcription regulation</keyword>
<feature type="chain" id="PRO_1000066897" description="HTH-type transcriptional regulator HdfR">
    <location>
        <begin position="1"/>
        <end position="279"/>
    </location>
</feature>
<feature type="domain" description="HTH lysR-type" evidence="1">
    <location>
        <begin position="1"/>
        <end position="58"/>
    </location>
</feature>
<feature type="DNA-binding region" description="H-T-H motif" evidence="1">
    <location>
        <begin position="18"/>
        <end position="37"/>
    </location>
</feature>
<name>HDFR_SHIBS</name>
<evidence type="ECO:0000255" key="1">
    <source>
        <dbReference type="HAMAP-Rule" id="MF_01233"/>
    </source>
</evidence>
<evidence type="ECO:0000305" key="2"/>
<accession>Q31UM0</accession>